<feature type="chain" id="PRO_1000077283" description="Probable cytosol aminopeptidase">
    <location>
        <begin position="1"/>
        <end position="503"/>
    </location>
</feature>
<feature type="active site" evidence="1">
    <location>
        <position position="282"/>
    </location>
</feature>
<feature type="active site" evidence="1">
    <location>
        <position position="356"/>
    </location>
</feature>
<feature type="binding site" evidence="1">
    <location>
        <position position="270"/>
    </location>
    <ligand>
        <name>Mn(2+)</name>
        <dbReference type="ChEBI" id="CHEBI:29035"/>
        <label>2</label>
    </ligand>
</feature>
<feature type="binding site" evidence="1">
    <location>
        <position position="275"/>
    </location>
    <ligand>
        <name>Mn(2+)</name>
        <dbReference type="ChEBI" id="CHEBI:29035"/>
        <label>1</label>
    </ligand>
</feature>
<feature type="binding site" evidence="1">
    <location>
        <position position="275"/>
    </location>
    <ligand>
        <name>Mn(2+)</name>
        <dbReference type="ChEBI" id="CHEBI:29035"/>
        <label>2</label>
    </ligand>
</feature>
<feature type="binding site" evidence="1">
    <location>
        <position position="293"/>
    </location>
    <ligand>
        <name>Mn(2+)</name>
        <dbReference type="ChEBI" id="CHEBI:29035"/>
        <label>2</label>
    </ligand>
</feature>
<feature type="binding site" evidence="1">
    <location>
        <position position="352"/>
    </location>
    <ligand>
        <name>Mn(2+)</name>
        <dbReference type="ChEBI" id="CHEBI:29035"/>
        <label>1</label>
    </ligand>
</feature>
<feature type="binding site" evidence="1">
    <location>
        <position position="354"/>
    </location>
    <ligand>
        <name>Mn(2+)</name>
        <dbReference type="ChEBI" id="CHEBI:29035"/>
        <label>1</label>
    </ligand>
</feature>
<feature type="binding site" evidence="1">
    <location>
        <position position="354"/>
    </location>
    <ligand>
        <name>Mn(2+)</name>
        <dbReference type="ChEBI" id="CHEBI:29035"/>
        <label>2</label>
    </ligand>
</feature>
<comment type="function">
    <text evidence="1">Presumably involved in the processing and regular turnover of intracellular proteins. Catalyzes the removal of unsubstituted N-terminal amino acids from various peptides.</text>
</comment>
<comment type="catalytic activity">
    <reaction evidence="1">
        <text>Release of an N-terminal amino acid, Xaa-|-Yaa-, in which Xaa is preferably Leu, but may be other amino acids including Pro although not Arg or Lys, and Yaa may be Pro. Amino acid amides and methyl esters are also readily hydrolyzed, but rates on arylamides are exceedingly low.</text>
        <dbReference type="EC" id="3.4.11.1"/>
    </reaction>
</comment>
<comment type="catalytic activity">
    <reaction evidence="1">
        <text>Release of an N-terminal amino acid, preferentially leucine, but not glutamic or aspartic acids.</text>
        <dbReference type="EC" id="3.4.11.10"/>
    </reaction>
</comment>
<comment type="cofactor">
    <cofactor evidence="1">
        <name>Mn(2+)</name>
        <dbReference type="ChEBI" id="CHEBI:29035"/>
    </cofactor>
    <text evidence="1">Binds 2 manganese ions per subunit.</text>
</comment>
<comment type="subcellular location">
    <subcellularLocation>
        <location evidence="1">Cytoplasm</location>
    </subcellularLocation>
</comment>
<comment type="similarity">
    <text evidence="1">Belongs to the peptidase M17 family.</text>
</comment>
<name>AMPA_SALPB</name>
<proteinExistence type="inferred from homology"/>
<protein>
    <recommendedName>
        <fullName evidence="1">Probable cytosol aminopeptidase</fullName>
        <ecNumber evidence="1">3.4.11.1</ecNumber>
    </recommendedName>
    <alternativeName>
        <fullName evidence="1">Leucine aminopeptidase</fullName>
        <shortName evidence="1">LAP</shortName>
        <ecNumber evidence="1">3.4.11.10</ecNumber>
    </alternativeName>
    <alternativeName>
        <fullName evidence="1">Leucyl aminopeptidase</fullName>
    </alternativeName>
</protein>
<reference key="1">
    <citation type="submission" date="2007-11" db="EMBL/GenBank/DDBJ databases">
        <authorList>
            <consortium name="The Salmonella enterica serovar Paratyphi B Genome Sequencing Project"/>
            <person name="McClelland M."/>
            <person name="Sanderson E.K."/>
            <person name="Porwollik S."/>
            <person name="Spieth J."/>
            <person name="Clifton W.S."/>
            <person name="Fulton R."/>
            <person name="Cordes M."/>
            <person name="Wollam A."/>
            <person name="Shah N."/>
            <person name="Pepin K."/>
            <person name="Bhonagiri V."/>
            <person name="Nash W."/>
            <person name="Johnson M."/>
            <person name="Thiruvilangam P."/>
            <person name="Wilson R."/>
        </authorList>
    </citation>
    <scope>NUCLEOTIDE SEQUENCE [LARGE SCALE GENOMIC DNA]</scope>
    <source>
        <strain>ATCC BAA-1250 / SPB7</strain>
    </source>
</reference>
<evidence type="ECO:0000255" key="1">
    <source>
        <dbReference type="HAMAP-Rule" id="MF_00181"/>
    </source>
</evidence>
<organism>
    <name type="scientific">Salmonella paratyphi B (strain ATCC BAA-1250 / SPB7)</name>
    <dbReference type="NCBI Taxonomy" id="1016998"/>
    <lineage>
        <taxon>Bacteria</taxon>
        <taxon>Pseudomonadati</taxon>
        <taxon>Pseudomonadota</taxon>
        <taxon>Gammaproteobacteria</taxon>
        <taxon>Enterobacterales</taxon>
        <taxon>Enterobacteriaceae</taxon>
        <taxon>Salmonella</taxon>
    </lineage>
</organism>
<dbReference type="EC" id="3.4.11.1" evidence="1"/>
<dbReference type="EC" id="3.4.11.10" evidence="1"/>
<dbReference type="EMBL" id="CP000886">
    <property type="protein sequence ID" value="ABX70904.1"/>
    <property type="molecule type" value="Genomic_DNA"/>
</dbReference>
<dbReference type="RefSeq" id="WP_000397158.1">
    <property type="nucleotide sequence ID" value="NC_010102.1"/>
</dbReference>
<dbReference type="SMR" id="A9N680"/>
<dbReference type="MEROPS" id="M17.003"/>
<dbReference type="KEGG" id="spq:SPAB_05635"/>
<dbReference type="PATRIC" id="fig|1016998.12.peg.5283"/>
<dbReference type="HOGENOM" id="CLU_013734_2_2_6"/>
<dbReference type="BioCyc" id="SENT1016998:SPAB_RS22995-MONOMER"/>
<dbReference type="Proteomes" id="UP000008556">
    <property type="component" value="Chromosome"/>
</dbReference>
<dbReference type="GO" id="GO:0005737">
    <property type="term" value="C:cytoplasm"/>
    <property type="evidence" value="ECO:0007669"/>
    <property type="project" value="UniProtKB-SubCell"/>
</dbReference>
<dbReference type="GO" id="GO:0030145">
    <property type="term" value="F:manganese ion binding"/>
    <property type="evidence" value="ECO:0007669"/>
    <property type="project" value="UniProtKB-UniRule"/>
</dbReference>
<dbReference type="GO" id="GO:0070006">
    <property type="term" value="F:metalloaminopeptidase activity"/>
    <property type="evidence" value="ECO:0007669"/>
    <property type="project" value="InterPro"/>
</dbReference>
<dbReference type="GO" id="GO:0006508">
    <property type="term" value="P:proteolysis"/>
    <property type="evidence" value="ECO:0007669"/>
    <property type="project" value="UniProtKB-KW"/>
</dbReference>
<dbReference type="CDD" id="cd00433">
    <property type="entry name" value="Peptidase_M17"/>
    <property type="match status" value="1"/>
</dbReference>
<dbReference type="FunFam" id="3.40.220.10:FF:000001">
    <property type="entry name" value="Probable cytosol aminopeptidase"/>
    <property type="match status" value="1"/>
</dbReference>
<dbReference type="FunFam" id="3.40.630.10:FF:000004">
    <property type="entry name" value="Probable cytosol aminopeptidase"/>
    <property type="match status" value="1"/>
</dbReference>
<dbReference type="Gene3D" id="3.40.220.10">
    <property type="entry name" value="Leucine Aminopeptidase, subunit E, domain 1"/>
    <property type="match status" value="1"/>
</dbReference>
<dbReference type="Gene3D" id="3.40.630.10">
    <property type="entry name" value="Zn peptidases"/>
    <property type="match status" value="1"/>
</dbReference>
<dbReference type="HAMAP" id="MF_00181">
    <property type="entry name" value="Cytosol_peptidase_M17"/>
    <property type="match status" value="1"/>
</dbReference>
<dbReference type="InterPro" id="IPR011356">
    <property type="entry name" value="Leucine_aapep/pepB"/>
</dbReference>
<dbReference type="InterPro" id="IPR043472">
    <property type="entry name" value="Macro_dom-like"/>
</dbReference>
<dbReference type="InterPro" id="IPR000819">
    <property type="entry name" value="Peptidase_M17_C"/>
</dbReference>
<dbReference type="InterPro" id="IPR023042">
    <property type="entry name" value="Peptidase_M17_leu_NH2_pept"/>
</dbReference>
<dbReference type="InterPro" id="IPR008283">
    <property type="entry name" value="Peptidase_M17_N"/>
</dbReference>
<dbReference type="NCBIfam" id="NF002072">
    <property type="entry name" value="PRK00913.1-1"/>
    <property type="match status" value="1"/>
</dbReference>
<dbReference type="NCBIfam" id="NF002073">
    <property type="entry name" value="PRK00913.1-2"/>
    <property type="match status" value="1"/>
</dbReference>
<dbReference type="NCBIfam" id="NF002074">
    <property type="entry name" value="PRK00913.1-4"/>
    <property type="match status" value="1"/>
</dbReference>
<dbReference type="PANTHER" id="PTHR11963:SF23">
    <property type="entry name" value="CYTOSOL AMINOPEPTIDASE"/>
    <property type="match status" value="1"/>
</dbReference>
<dbReference type="PANTHER" id="PTHR11963">
    <property type="entry name" value="LEUCINE AMINOPEPTIDASE-RELATED"/>
    <property type="match status" value="1"/>
</dbReference>
<dbReference type="Pfam" id="PF00883">
    <property type="entry name" value="Peptidase_M17"/>
    <property type="match status" value="1"/>
</dbReference>
<dbReference type="Pfam" id="PF02789">
    <property type="entry name" value="Peptidase_M17_N"/>
    <property type="match status" value="1"/>
</dbReference>
<dbReference type="PRINTS" id="PR00481">
    <property type="entry name" value="LAMNOPPTDASE"/>
</dbReference>
<dbReference type="SUPFAM" id="SSF52949">
    <property type="entry name" value="Macro domain-like"/>
    <property type="match status" value="1"/>
</dbReference>
<dbReference type="SUPFAM" id="SSF53187">
    <property type="entry name" value="Zn-dependent exopeptidases"/>
    <property type="match status" value="1"/>
</dbReference>
<dbReference type="PROSITE" id="PS00631">
    <property type="entry name" value="CYTOSOL_AP"/>
    <property type="match status" value="1"/>
</dbReference>
<keyword id="KW-0031">Aminopeptidase</keyword>
<keyword id="KW-0963">Cytoplasm</keyword>
<keyword id="KW-0378">Hydrolase</keyword>
<keyword id="KW-0464">Manganese</keyword>
<keyword id="KW-0479">Metal-binding</keyword>
<keyword id="KW-0645">Protease</keyword>
<sequence length="503" mass="54890">MEFSVKSGSPEKQRSACIVVGVFEPRRLSPIAEQLDKISDGYISALLRRGELEGKPGQTLLLHHVPNVLSERILLIGCGKERELDERQYKQVIQKTINTLNDTGSMEAVCFLTELHVKGRNNYWKVRQAVETAKETLYSFDQLKTNKSEPRRPLRKMVFNVPTRRELTSGERAIQHGLAIAAGIKAAKDLGNMPPNICNAAYLASQARQLADSYSKNVITRVIGEQQMRELGMNAYLAVGHGSQNESLMSVIEYKGNPSEDARPIVLVGKGLTFDSGGISIKPSEGMDEMKYDMCGAAAVYGVMRMVAELQLPINVIGVLAGCENMPGGRAYRPGDVLTTMSGQTVEVLNTDAEGRLVLCDVLTYVERFEPEAVIDVATLTGACVIALGHHITGLMSNHNPLAHELIGASEQAGDRAWRLPLGDEFQEQLESNFADMANIGGRPGGAITAGCFLSRFTRKYNWAHLDIAGTAWRSGKAKGATGRPVALLSQFLLNRAGFNGEE</sequence>
<accession>A9N680</accession>
<gene>
    <name evidence="1" type="primary">pepA</name>
    <name type="ordered locus">SPAB_05635</name>
</gene>